<organism>
    <name type="scientific">Acinetobacter baumannii (strain AYE)</name>
    <dbReference type="NCBI Taxonomy" id="509173"/>
    <lineage>
        <taxon>Bacteria</taxon>
        <taxon>Pseudomonadati</taxon>
        <taxon>Pseudomonadota</taxon>
        <taxon>Gammaproteobacteria</taxon>
        <taxon>Moraxellales</taxon>
        <taxon>Moraxellaceae</taxon>
        <taxon>Acinetobacter</taxon>
        <taxon>Acinetobacter calcoaceticus/baumannii complex</taxon>
    </lineage>
</organism>
<gene>
    <name evidence="1" type="primary">rplS</name>
    <name type="ordered locus">ABAYE0324</name>
</gene>
<feature type="chain" id="PRO_1000193778" description="Large ribosomal subunit protein bL19">
    <location>
        <begin position="1"/>
        <end position="122"/>
    </location>
</feature>
<evidence type="ECO:0000255" key="1">
    <source>
        <dbReference type="HAMAP-Rule" id="MF_00402"/>
    </source>
</evidence>
<evidence type="ECO:0000305" key="2"/>
<sequence>MSGKHPLVQAIENSQLKTDLPEFAPGDTVVVQVKVKEGDRERLQAFEGVVIAKKNRGLNSAFTVRKISSGVGVERVFQTHSPVVAKIEVKRRGDVRRAKLYYLRDLSGKAARIREKLPARKA</sequence>
<comment type="function">
    <text evidence="1">This protein is located at the 30S-50S ribosomal subunit interface and may play a role in the structure and function of the aminoacyl-tRNA binding site.</text>
</comment>
<comment type="similarity">
    <text evidence="1">Belongs to the bacterial ribosomal protein bL19 family.</text>
</comment>
<reference key="1">
    <citation type="journal article" date="2008" name="PLoS ONE">
        <title>Comparative analysis of Acinetobacters: three genomes for three lifestyles.</title>
        <authorList>
            <person name="Vallenet D."/>
            <person name="Nordmann P."/>
            <person name="Barbe V."/>
            <person name="Poirel L."/>
            <person name="Mangenot S."/>
            <person name="Bataille E."/>
            <person name="Dossat C."/>
            <person name="Gas S."/>
            <person name="Kreimeyer A."/>
            <person name="Lenoble P."/>
            <person name="Oztas S."/>
            <person name="Poulain J."/>
            <person name="Segurens B."/>
            <person name="Robert C."/>
            <person name="Abergel C."/>
            <person name="Claverie J.-M."/>
            <person name="Raoult D."/>
            <person name="Medigue C."/>
            <person name="Weissenbach J."/>
            <person name="Cruveiller S."/>
        </authorList>
    </citation>
    <scope>NUCLEOTIDE SEQUENCE [LARGE SCALE GENOMIC DNA]</scope>
    <source>
        <strain>AYE</strain>
    </source>
</reference>
<protein>
    <recommendedName>
        <fullName evidence="1">Large ribosomal subunit protein bL19</fullName>
    </recommendedName>
    <alternativeName>
        <fullName evidence="2">50S ribosomal protein L19</fullName>
    </alternativeName>
</protein>
<dbReference type="EMBL" id="CU459141">
    <property type="protein sequence ID" value="CAM85302.1"/>
    <property type="molecule type" value="Genomic_DNA"/>
</dbReference>
<dbReference type="RefSeq" id="WP_000014562.1">
    <property type="nucleotide sequence ID" value="NZ_JBDGFB010000011.1"/>
</dbReference>
<dbReference type="SMR" id="B0V8J2"/>
<dbReference type="EnsemblBacteria" id="CAM85302">
    <property type="protein sequence ID" value="CAM85302"/>
    <property type="gene ID" value="ABAYE0324"/>
</dbReference>
<dbReference type="GeneID" id="92895396"/>
<dbReference type="KEGG" id="aby:ABAYE0324"/>
<dbReference type="HOGENOM" id="CLU_103507_2_2_6"/>
<dbReference type="GO" id="GO:0022625">
    <property type="term" value="C:cytosolic large ribosomal subunit"/>
    <property type="evidence" value="ECO:0007669"/>
    <property type="project" value="TreeGrafter"/>
</dbReference>
<dbReference type="GO" id="GO:0003735">
    <property type="term" value="F:structural constituent of ribosome"/>
    <property type="evidence" value="ECO:0007669"/>
    <property type="project" value="InterPro"/>
</dbReference>
<dbReference type="GO" id="GO:0006412">
    <property type="term" value="P:translation"/>
    <property type="evidence" value="ECO:0007669"/>
    <property type="project" value="UniProtKB-UniRule"/>
</dbReference>
<dbReference type="FunFam" id="2.30.30.790:FF:000001">
    <property type="entry name" value="50S ribosomal protein L19"/>
    <property type="match status" value="1"/>
</dbReference>
<dbReference type="Gene3D" id="2.30.30.790">
    <property type="match status" value="1"/>
</dbReference>
<dbReference type="HAMAP" id="MF_00402">
    <property type="entry name" value="Ribosomal_bL19"/>
    <property type="match status" value="1"/>
</dbReference>
<dbReference type="InterPro" id="IPR001857">
    <property type="entry name" value="Ribosomal_bL19"/>
</dbReference>
<dbReference type="InterPro" id="IPR018257">
    <property type="entry name" value="Ribosomal_bL19_CS"/>
</dbReference>
<dbReference type="InterPro" id="IPR038657">
    <property type="entry name" value="Ribosomal_bL19_sf"/>
</dbReference>
<dbReference type="InterPro" id="IPR008991">
    <property type="entry name" value="Translation_prot_SH3-like_sf"/>
</dbReference>
<dbReference type="NCBIfam" id="TIGR01024">
    <property type="entry name" value="rplS_bact"/>
    <property type="match status" value="1"/>
</dbReference>
<dbReference type="PANTHER" id="PTHR15680:SF9">
    <property type="entry name" value="LARGE RIBOSOMAL SUBUNIT PROTEIN BL19M"/>
    <property type="match status" value="1"/>
</dbReference>
<dbReference type="PANTHER" id="PTHR15680">
    <property type="entry name" value="RIBOSOMAL PROTEIN L19"/>
    <property type="match status" value="1"/>
</dbReference>
<dbReference type="Pfam" id="PF01245">
    <property type="entry name" value="Ribosomal_L19"/>
    <property type="match status" value="1"/>
</dbReference>
<dbReference type="PIRSF" id="PIRSF002191">
    <property type="entry name" value="Ribosomal_L19"/>
    <property type="match status" value="1"/>
</dbReference>
<dbReference type="PRINTS" id="PR00061">
    <property type="entry name" value="RIBOSOMALL19"/>
</dbReference>
<dbReference type="SUPFAM" id="SSF50104">
    <property type="entry name" value="Translation proteins SH3-like domain"/>
    <property type="match status" value="1"/>
</dbReference>
<dbReference type="PROSITE" id="PS01015">
    <property type="entry name" value="RIBOSOMAL_L19"/>
    <property type="match status" value="1"/>
</dbReference>
<name>RL19_ACIBY</name>
<keyword id="KW-0687">Ribonucleoprotein</keyword>
<keyword id="KW-0689">Ribosomal protein</keyword>
<accession>B0V8J2</accession>
<proteinExistence type="inferred from homology"/>